<gene>
    <name type="primary">rps7-A</name>
</gene>
<gene>
    <name type="primary">rps7-B</name>
</gene>
<dbReference type="EMBL" id="M17841">
    <property type="protein sequence ID" value="AAA85360.1"/>
    <property type="molecule type" value="Genomic_DNA"/>
</dbReference>
<dbReference type="EMBL" id="X86563">
    <property type="protein sequence ID" value="CAA60339.1"/>
    <property type="molecule type" value="Genomic_DNA"/>
</dbReference>
<dbReference type="EMBL" id="X86563">
    <property type="protein sequence ID" value="CAA60362.1"/>
    <property type="molecule type" value="Genomic_DNA"/>
</dbReference>
<dbReference type="PIR" id="S58630">
    <property type="entry name" value="S58630"/>
</dbReference>
<dbReference type="SMR" id="P12339"/>
<dbReference type="FunCoup" id="P12339">
    <property type="interactions" value="1413"/>
</dbReference>
<dbReference type="STRING" id="4577.P12339"/>
<dbReference type="PaxDb" id="4577-GRMZM5G806488_P01"/>
<dbReference type="EnsemblPlants" id="Zm00001eb435130_T001">
    <property type="protein sequence ID" value="Zm00001eb435130_P001"/>
    <property type="gene ID" value="Zm00001eb435130"/>
</dbReference>
<dbReference type="EnsemblPlants" id="Zm00001eb437080_T001">
    <property type="protein sequence ID" value="Zm00001eb437080_P001"/>
    <property type="gene ID" value="Zm00001eb437080"/>
</dbReference>
<dbReference type="EnsemblPlants" id="Zm00001eb437740_T001">
    <property type="protein sequence ID" value="Zm00001eb437740_P001"/>
    <property type="gene ID" value="Zm00001eb437740"/>
</dbReference>
<dbReference type="EnsemblPlants" id="Zm00001eb442130_T001">
    <property type="protein sequence ID" value="Zm00001eb442130_P001"/>
    <property type="gene ID" value="Zm00001eb442130"/>
</dbReference>
<dbReference type="Gramene" id="Zm00001eb435130_T001">
    <property type="protein sequence ID" value="Zm00001eb435130_P001"/>
    <property type="gene ID" value="Zm00001eb435130"/>
</dbReference>
<dbReference type="Gramene" id="Zm00001eb437080_T001">
    <property type="protein sequence ID" value="Zm00001eb437080_P001"/>
    <property type="gene ID" value="Zm00001eb437080"/>
</dbReference>
<dbReference type="Gramene" id="Zm00001eb437740_T001">
    <property type="protein sequence ID" value="Zm00001eb437740_P001"/>
    <property type="gene ID" value="Zm00001eb437740"/>
</dbReference>
<dbReference type="Gramene" id="Zm00001eb442130_T001">
    <property type="protein sequence ID" value="Zm00001eb442130_P001"/>
    <property type="gene ID" value="Zm00001eb442130"/>
</dbReference>
<dbReference type="KEGG" id="zma:845239"/>
<dbReference type="KEGG" id="zma:845240"/>
<dbReference type="MaizeGDB" id="66081"/>
<dbReference type="eggNOG" id="KOG3291">
    <property type="taxonomic scope" value="Eukaryota"/>
</dbReference>
<dbReference type="HOGENOM" id="CLU_072226_1_0_1"/>
<dbReference type="InParanoid" id="P12339"/>
<dbReference type="OMA" id="WILISAR"/>
<dbReference type="OrthoDB" id="607010at2759"/>
<dbReference type="Proteomes" id="UP000007305">
    <property type="component" value="Chloroplast"/>
</dbReference>
<dbReference type="ExpressionAtlas" id="P12339">
    <property type="expression patterns" value="baseline and differential"/>
</dbReference>
<dbReference type="GO" id="GO:0009507">
    <property type="term" value="C:chloroplast"/>
    <property type="evidence" value="ECO:0007669"/>
    <property type="project" value="UniProtKB-SubCell"/>
</dbReference>
<dbReference type="GO" id="GO:0005840">
    <property type="term" value="C:ribosome"/>
    <property type="evidence" value="ECO:0000318"/>
    <property type="project" value="GO_Central"/>
</dbReference>
<dbReference type="GO" id="GO:0015935">
    <property type="term" value="C:small ribosomal subunit"/>
    <property type="evidence" value="ECO:0007669"/>
    <property type="project" value="InterPro"/>
</dbReference>
<dbReference type="GO" id="GO:0003729">
    <property type="term" value="F:mRNA binding"/>
    <property type="evidence" value="ECO:0000318"/>
    <property type="project" value="GO_Central"/>
</dbReference>
<dbReference type="GO" id="GO:0019843">
    <property type="term" value="F:rRNA binding"/>
    <property type="evidence" value="ECO:0000318"/>
    <property type="project" value="GO_Central"/>
</dbReference>
<dbReference type="GO" id="GO:0003735">
    <property type="term" value="F:structural constituent of ribosome"/>
    <property type="evidence" value="ECO:0000318"/>
    <property type="project" value="GO_Central"/>
</dbReference>
<dbReference type="GO" id="GO:0000028">
    <property type="term" value="P:ribosomal small subunit assembly"/>
    <property type="evidence" value="ECO:0000318"/>
    <property type="project" value="GO_Central"/>
</dbReference>
<dbReference type="GO" id="GO:0006412">
    <property type="term" value="P:translation"/>
    <property type="evidence" value="ECO:0000318"/>
    <property type="project" value="GO_Central"/>
</dbReference>
<dbReference type="CDD" id="cd14871">
    <property type="entry name" value="uS7_Chloroplast"/>
    <property type="match status" value="1"/>
</dbReference>
<dbReference type="FunFam" id="1.10.455.10:FF:000001">
    <property type="entry name" value="30S ribosomal protein S7"/>
    <property type="match status" value="1"/>
</dbReference>
<dbReference type="Gene3D" id="1.10.455.10">
    <property type="entry name" value="Ribosomal protein S7 domain"/>
    <property type="match status" value="1"/>
</dbReference>
<dbReference type="HAMAP" id="MF_00480_B">
    <property type="entry name" value="Ribosomal_uS7_B"/>
    <property type="match status" value="1"/>
</dbReference>
<dbReference type="InterPro" id="IPR000235">
    <property type="entry name" value="Ribosomal_uS7"/>
</dbReference>
<dbReference type="InterPro" id="IPR005717">
    <property type="entry name" value="Ribosomal_uS7_bac/org-type"/>
</dbReference>
<dbReference type="InterPro" id="IPR020606">
    <property type="entry name" value="Ribosomal_uS7_CS"/>
</dbReference>
<dbReference type="InterPro" id="IPR023798">
    <property type="entry name" value="Ribosomal_uS7_dom"/>
</dbReference>
<dbReference type="InterPro" id="IPR036823">
    <property type="entry name" value="Ribosomal_uS7_dom_sf"/>
</dbReference>
<dbReference type="NCBIfam" id="TIGR01029">
    <property type="entry name" value="rpsG_bact"/>
    <property type="match status" value="1"/>
</dbReference>
<dbReference type="PANTHER" id="PTHR11205">
    <property type="entry name" value="RIBOSOMAL PROTEIN S7"/>
    <property type="match status" value="1"/>
</dbReference>
<dbReference type="Pfam" id="PF00177">
    <property type="entry name" value="Ribosomal_S7"/>
    <property type="match status" value="1"/>
</dbReference>
<dbReference type="PIRSF" id="PIRSF002122">
    <property type="entry name" value="RPS7p_RPS7a_RPS5e_RPS7o"/>
    <property type="match status" value="1"/>
</dbReference>
<dbReference type="SUPFAM" id="SSF47973">
    <property type="entry name" value="Ribosomal protein S7"/>
    <property type="match status" value="1"/>
</dbReference>
<dbReference type="PROSITE" id="PS00052">
    <property type="entry name" value="RIBOSOMAL_S7"/>
    <property type="match status" value="1"/>
</dbReference>
<sequence>MSRRGTAEKRTAKSDPIFRNRLVNMVVNRIMKDGKKSLAYQILYRAVKKIQQKTETNPLLVLRQAIRRVTPNIGVKTRRNKKGSTRKVPIEIGSKQGRALAIRWLLEASQKRPGRNMAFKLSSELVDAAKGSGGAIRKKEATHRMAEANRALAHFR</sequence>
<feature type="chain" id="PRO_0000124472" description="Small ribosomal subunit protein uS7cz/uS7cy">
    <location>
        <begin position="1"/>
        <end position="156"/>
    </location>
</feature>
<feature type="sequence conflict" description="In Ref. 1; AAA85360." evidence="3" ref="1">
    <original>I</original>
    <variation>M</variation>
    <location>
        <position position="90"/>
    </location>
</feature>
<proteinExistence type="inferred from homology"/>
<comment type="function">
    <text evidence="1">One of the primary rRNA binding proteins, it binds directly to 16S rRNA where it nucleates assembly of the head domain of the 30S subunit.</text>
</comment>
<comment type="subunit">
    <text>Part of the 30S ribosomal subunit.</text>
</comment>
<comment type="subcellular location">
    <subcellularLocation>
        <location>Plastid</location>
        <location>Chloroplast</location>
    </subcellularLocation>
</comment>
<comment type="similarity">
    <text evidence="3">Belongs to the universal ribosomal protein uS7 family.</text>
</comment>
<accession>P12339</accession>
<name>RR7_MAIZE</name>
<geneLocation type="chloroplast"/>
<reference key="1">
    <citation type="journal article" date="1987" name="J. Biol. Chem.">
        <title>Nucleotide sequence, promoter analysis, and linkage mapping of the unusually organized operon encoding ribosomal proteins S7 and S12 in maize chloroplast.</title>
        <authorList>
            <person name="Giese K."/>
            <person name="Subramanian A.R."/>
            <person name="Larrinua I.M."/>
            <person name="Bogorad L."/>
        </authorList>
    </citation>
    <scope>NUCLEOTIDE SEQUENCE [LARGE SCALE GENOMIC DNA]</scope>
    <source>
        <strain>cv. B73</strain>
        <tissue>Leaf</tissue>
    </source>
</reference>
<reference key="2">
    <citation type="journal article" date="1995" name="J. Mol. Biol.">
        <title>Complete sequence of the maize chloroplast genome: gene content, hotspots of divergence and fine tuning of genetic information by transcript editing.</title>
        <authorList>
            <person name="Maier R.M."/>
            <person name="Neckermann K."/>
            <person name="Igloi G.L."/>
            <person name="Koessel H."/>
        </authorList>
    </citation>
    <scope>NUCLEOTIDE SEQUENCE [LARGE SCALE GENOMIC DNA]</scope>
    <source>
        <strain>cv. B73</strain>
    </source>
</reference>
<keyword id="KW-0150">Chloroplast</keyword>
<keyword id="KW-0934">Plastid</keyword>
<keyword id="KW-1185">Reference proteome</keyword>
<keyword id="KW-0687">Ribonucleoprotein</keyword>
<keyword id="KW-0689">Ribosomal protein</keyword>
<keyword id="KW-0694">RNA-binding</keyword>
<keyword id="KW-0699">rRNA-binding</keyword>
<protein>
    <recommendedName>
        <fullName evidence="2">Small ribosomal subunit protein uS7cz/uS7cy</fullName>
    </recommendedName>
    <alternativeName>
        <fullName>30S ribosomal protein S7, chloroplastic</fullName>
    </alternativeName>
</protein>
<evidence type="ECO:0000250" key="1"/>
<evidence type="ECO:0000255" key="2">
    <source>
        <dbReference type="HAMAP-Rule" id="MF_00480"/>
    </source>
</evidence>
<evidence type="ECO:0000305" key="3"/>
<organism>
    <name type="scientific">Zea mays</name>
    <name type="common">Maize</name>
    <dbReference type="NCBI Taxonomy" id="4577"/>
    <lineage>
        <taxon>Eukaryota</taxon>
        <taxon>Viridiplantae</taxon>
        <taxon>Streptophyta</taxon>
        <taxon>Embryophyta</taxon>
        <taxon>Tracheophyta</taxon>
        <taxon>Spermatophyta</taxon>
        <taxon>Magnoliopsida</taxon>
        <taxon>Liliopsida</taxon>
        <taxon>Poales</taxon>
        <taxon>Poaceae</taxon>
        <taxon>PACMAD clade</taxon>
        <taxon>Panicoideae</taxon>
        <taxon>Andropogonodae</taxon>
        <taxon>Andropogoneae</taxon>
        <taxon>Tripsacinae</taxon>
        <taxon>Zea</taxon>
    </lineage>
</organism>